<reference key="1">
    <citation type="journal article" date="1999" name="Genomics">
        <title>Primate evolution of an olfactory receptor cluster: diversification by gene conversion and recent emergence of pseudogenes.</title>
        <authorList>
            <person name="Sharon D."/>
            <person name="Glusman G."/>
            <person name="Pilpel Y."/>
            <person name="Khen M."/>
            <person name="Gruetzner F."/>
            <person name="Haaf T."/>
            <person name="Lancet D."/>
        </authorList>
    </citation>
    <scope>NUCLEOTIDE SEQUENCE [GENOMIC DNA]</scope>
</reference>
<keyword id="KW-1003">Cell membrane</keyword>
<keyword id="KW-1015">Disulfide bond</keyword>
<keyword id="KW-0297">G-protein coupled receptor</keyword>
<keyword id="KW-0325">Glycoprotein</keyword>
<keyword id="KW-0472">Membrane</keyword>
<keyword id="KW-0552">Olfaction</keyword>
<keyword id="KW-0675">Receptor</keyword>
<keyword id="KW-1185">Reference proteome</keyword>
<keyword id="KW-0716">Sensory transduction</keyword>
<keyword id="KW-0807">Transducer</keyword>
<keyword id="KW-0812">Transmembrane</keyword>
<keyword id="KW-1133">Transmembrane helix</keyword>
<dbReference type="EMBL" id="AF101759">
    <property type="protein sequence ID" value="AAF03335.1"/>
    <property type="molecule type" value="Genomic_DNA"/>
</dbReference>
<dbReference type="SMR" id="Q9TU89"/>
<dbReference type="FunCoup" id="Q9TU89">
    <property type="interactions" value="332"/>
</dbReference>
<dbReference type="GlyCosmos" id="Q9TU89">
    <property type="glycosylation" value="1 site, No reported glycans"/>
</dbReference>
<dbReference type="InParanoid" id="Q9TU89"/>
<dbReference type="Proteomes" id="UP000001519">
    <property type="component" value="Unplaced"/>
</dbReference>
<dbReference type="GO" id="GO:0005886">
    <property type="term" value="C:plasma membrane"/>
    <property type="evidence" value="ECO:0007669"/>
    <property type="project" value="UniProtKB-SubCell"/>
</dbReference>
<dbReference type="GO" id="GO:0004930">
    <property type="term" value="F:G protein-coupled receptor activity"/>
    <property type="evidence" value="ECO:0007669"/>
    <property type="project" value="UniProtKB-KW"/>
</dbReference>
<dbReference type="GO" id="GO:0005549">
    <property type="term" value="F:odorant binding"/>
    <property type="evidence" value="ECO:0000318"/>
    <property type="project" value="GO_Central"/>
</dbReference>
<dbReference type="GO" id="GO:0004984">
    <property type="term" value="F:olfactory receptor activity"/>
    <property type="evidence" value="ECO:0000318"/>
    <property type="project" value="GO_Central"/>
</dbReference>
<dbReference type="FunFam" id="1.10.1220.70:FF:000001">
    <property type="entry name" value="Olfactory receptor"/>
    <property type="match status" value="1"/>
</dbReference>
<dbReference type="FunFam" id="1.20.1070.10:FF:000010">
    <property type="entry name" value="Olfactory receptor"/>
    <property type="match status" value="1"/>
</dbReference>
<dbReference type="Gene3D" id="1.20.1070.10">
    <property type="entry name" value="Rhodopsin 7-helix transmembrane proteins"/>
    <property type="match status" value="1"/>
</dbReference>
<dbReference type="InterPro" id="IPR000276">
    <property type="entry name" value="GPCR_Rhodpsn"/>
</dbReference>
<dbReference type="InterPro" id="IPR017452">
    <property type="entry name" value="GPCR_Rhodpsn_7TM"/>
</dbReference>
<dbReference type="InterPro" id="IPR000725">
    <property type="entry name" value="Olfact_rcpt"/>
</dbReference>
<dbReference type="PANTHER" id="PTHR48001">
    <property type="entry name" value="OLFACTORY RECEPTOR"/>
    <property type="match status" value="1"/>
</dbReference>
<dbReference type="Pfam" id="PF13853">
    <property type="entry name" value="7tm_4"/>
    <property type="match status" value="1"/>
</dbReference>
<dbReference type="PRINTS" id="PR00237">
    <property type="entry name" value="GPCRRHODOPSN"/>
</dbReference>
<dbReference type="PRINTS" id="PR00245">
    <property type="entry name" value="OLFACTORYR"/>
</dbReference>
<dbReference type="SUPFAM" id="SSF81321">
    <property type="entry name" value="Family A G protein-coupled receptor-like"/>
    <property type="match status" value="1"/>
</dbReference>
<dbReference type="PROSITE" id="PS00237">
    <property type="entry name" value="G_PROTEIN_RECEP_F1_1"/>
    <property type="match status" value="1"/>
</dbReference>
<dbReference type="PROSITE" id="PS50262">
    <property type="entry name" value="G_PROTEIN_RECEP_F1_2"/>
    <property type="match status" value="1"/>
</dbReference>
<proteinExistence type="inferred from homology"/>
<sequence>MQPESGANGTVIAEFILLGLLEAPGLQPVVFVLFLFAYLVTVGGNLSILAAVLVEPELHTPMYFFLGNLSVLDVGCISVTVPSMLSRLLSRKRAVPCGACLTQLFFFHLFVGVDCFLLIAMAYDRFLAICRPLTYSTRMSQTVQRMLVAASWACAFTNALTHTVAMSTLNFCGPNVINHFYCDLPQLCQLSCSSTQLSELLLFAVGFIMAGTSMALIVISYIHVAAAVLRIRSVEGRKKAFSTCGSHLTVVAIFYGSGIFNYMRLGSTKLSDKDKAVGIFNTVINPMLNPIIYSFRNPDVQSAIWRMLTGRRSLA</sequence>
<accession>Q9TU89</accession>
<organism>
    <name type="scientific">Gorilla gorilla gorilla</name>
    <name type="common">Western lowland gorilla</name>
    <dbReference type="NCBI Taxonomy" id="9595"/>
    <lineage>
        <taxon>Eukaryota</taxon>
        <taxon>Metazoa</taxon>
        <taxon>Chordata</taxon>
        <taxon>Craniata</taxon>
        <taxon>Vertebrata</taxon>
        <taxon>Euteleostomi</taxon>
        <taxon>Mammalia</taxon>
        <taxon>Eutheria</taxon>
        <taxon>Euarchontoglires</taxon>
        <taxon>Primates</taxon>
        <taxon>Haplorrhini</taxon>
        <taxon>Catarrhini</taxon>
        <taxon>Hominidae</taxon>
        <taxon>Gorilla</taxon>
    </lineage>
</organism>
<gene>
    <name type="primary">OR3A1</name>
</gene>
<protein>
    <recommendedName>
        <fullName>Olfactory receptor 3A1</fullName>
    </recommendedName>
</protein>
<feature type="chain" id="PRO_0000150516" description="Olfactory receptor 3A1">
    <location>
        <begin position="1"/>
        <end position="315"/>
    </location>
</feature>
<feature type="topological domain" description="Extracellular" evidence="1">
    <location>
        <begin position="1"/>
        <end position="28"/>
    </location>
</feature>
<feature type="transmembrane region" description="Helical; Name=1" evidence="1">
    <location>
        <begin position="29"/>
        <end position="52"/>
    </location>
</feature>
<feature type="topological domain" description="Cytoplasmic" evidence="1">
    <location>
        <begin position="53"/>
        <end position="60"/>
    </location>
</feature>
<feature type="transmembrane region" description="Helical; Name=2" evidence="1">
    <location>
        <begin position="61"/>
        <end position="82"/>
    </location>
</feature>
<feature type="topological domain" description="Extracellular" evidence="1">
    <location>
        <begin position="83"/>
        <end position="103"/>
    </location>
</feature>
<feature type="transmembrane region" description="Helical; Name=3" evidence="1">
    <location>
        <begin position="104"/>
        <end position="123"/>
    </location>
</feature>
<feature type="topological domain" description="Cytoplasmic" evidence="1">
    <location>
        <begin position="124"/>
        <end position="143"/>
    </location>
</feature>
<feature type="transmembrane region" description="Helical; Name=4" evidence="1">
    <location>
        <begin position="144"/>
        <end position="161"/>
    </location>
</feature>
<feature type="topological domain" description="Extracellular" evidence="1">
    <location>
        <begin position="162"/>
        <end position="199"/>
    </location>
</feature>
<feature type="transmembrane region" description="Helical; Name=5" evidence="1">
    <location>
        <begin position="200"/>
        <end position="223"/>
    </location>
</feature>
<feature type="topological domain" description="Cytoplasmic" evidence="1">
    <location>
        <begin position="224"/>
        <end position="240"/>
    </location>
</feature>
<feature type="transmembrane region" description="Helical; Name=6" evidence="1">
    <location>
        <begin position="241"/>
        <end position="264"/>
    </location>
</feature>
<feature type="topological domain" description="Extracellular" evidence="1">
    <location>
        <begin position="265"/>
        <end position="275"/>
    </location>
</feature>
<feature type="transmembrane region" description="Helical; Name=7" evidence="1">
    <location>
        <begin position="276"/>
        <end position="295"/>
    </location>
</feature>
<feature type="topological domain" description="Cytoplasmic" evidence="1">
    <location>
        <begin position="296"/>
        <end position="315"/>
    </location>
</feature>
<feature type="glycosylation site" description="N-linked (GlcNAc...) asparagine" evidence="1">
    <location>
        <position position="8"/>
    </location>
</feature>
<feature type="disulfide bond" evidence="2">
    <location>
        <begin position="100"/>
        <end position="192"/>
    </location>
</feature>
<name>OR3A1_GORGO</name>
<comment type="function">
    <text evidence="3">Odorant receptor.</text>
</comment>
<comment type="subcellular location">
    <subcellularLocation>
        <location>Cell membrane</location>
        <topology>Multi-pass membrane protein</topology>
    </subcellularLocation>
</comment>
<comment type="similarity">
    <text evidence="2">Belongs to the G-protein coupled receptor 1 family.</text>
</comment>
<evidence type="ECO:0000255" key="1"/>
<evidence type="ECO:0000255" key="2">
    <source>
        <dbReference type="PROSITE-ProRule" id="PRU00521"/>
    </source>
</evidence>
<evidence type="ECO:0000305" key="3"/>